<comment type="subcellular location">
    <subcellularLocation>
        <location evidence="1">Cytoplasm</location>
    </subcellularLocation>
</comment>
<comment type="similarity">
    <text evidence="1">Belongs to the TACO1 family.</text>
</comment>
<gene>
    <name type="ordered locus">ML0475</name>
    <name type="ORF">B1177_C2_181</name>
    <name type="ORF">u1177b</name>
</gene>
<keyword id="KW-0963">Cytoplasm</keyword>
<keyword id="KW-0238">DNA-binding</keyword>
<keyword id="KW-1185">Reference proteome</keyword>
<keyword id="KW-0804">Transcription</keyword>
<keyword id="KW-0805">Transcription regulation</keyword>
<name>Y475_MYCLE</name>
<feature type="chain" id="PRO_0000175847" description="Probable transcriptional regulatory protein ML0475">
    <location>
        <begin position="1"/>
        <end position="251"/>
    </location>
</feature>
<proteinExistence type="inferred from homology"/>
<sequence>MSGHSKWATTKHKKAVIDARRGKMFARLIKNIEVAARVGGGDPVGNPTLYDAIQKAKKSSVPNGNIERARKRGAGEEVGGADWQVITYEGYAPNGVAVLIECLTDNRNRAAGEVRVAMTRNGGAMADPGSVAYLFSRKGVVTLEKNGLTEDDVLAAVLDAGAEEVNDLGDSFEVIAEPGDLVAVRTALQDAGIDYESAEASFQPSVSMPVDLDGARKVFKLVDALEDSDDVHNVWTNADVSDEVLAALDGE</sequence>
<protein>
    <recommendedName>
        <fullName evidence="1">Probable transcriptional regulatory protein ML0475</fullName>
    </recommendedName>
</protein>
<dbReference type="EMBL" id="U00011">
    <property type="protein sequence ID" value="AAA17094.1"/>
    <property type="molecule type" value="Genomic_DNA"/>
</dbReference>
<dbReference type="EMBL" id="AL583918">
    <property type="protein sequence ID" value="CAC29983.1"/>
    <property type="molecule type" value="Genomic_DNA"/>
</dbReference>
<dbReference type="PIR" id="S72730">
    <property type="entry name" value="S72730"/>
</dbReference>
<dbReference type="RefSeq" id="NP_301420.1">
    <property type="nucleotide sequence ID" value="NC_002677.1"/>
</dbReference>
<dbReference type="RefSeq" id="WP_010907744.1">
    <property type="nucleotide sequence ID" value="NC_002677.1"/>
</dbReference>
<dbReference type="SMR" id="Q49645"/>
<dbReference type="STRING" id="272631.gene:17574296"/>
<dbReference type="KEGG" id="mle:ML0475"/>
<dbReference type="PATRIC" id="fig|272631.5.peg.836"/>
<dbReference type="Leproma" id="ML0475"/>
<dbReference type="eggNOG" id="COG0217">
    <property type="taxonomic scope" value="Bacteria"/>
</dbReference>
<dbReference type="HOGENOM" id="CLU_062974_2_2_11"/>
<dbReference type="OrthoDB" id="9781053at2"/>
<dbReference type="Proteomes" id="UP000000806">
    <property type="component" value="Chromosome"/>
</dbReference>
<dbReference type="GO" id="GO:0005829">
    <property type="term" value="C:cytosol"/>
    <property type="evidence" value="ECO:0007669"/>
    <property type="project" value="TreeGrafter"/>
</dbReference>
<dbReference type="GO" id="GO:0003677">
    <property type="term" value="F:DNA binding"/>
    <property type="evidence" value="ECO:0007669"/>
    <property type="project" value="UniProtKB-UniRule"/>
</dbReference>
<dbReference type="GO" id="GO:0006355">
    <property type="term" value="P:regulation of DNA-templated transcription"/>
    <property type="evidence" value="ECO:0007669"/>
    <property type="project" value="UniProtKB-UniRule"/>
</dbReference>
<dbReference type="FunFam" id="1.10.10.200:FF:000002">
    <property type="entry name" value="Probable transcriptional regulatory protein CLM62_37755"/>
    <property type="match status" value="1"/>
</dbReference>
<dbReference type="FunFam" id="3.30.70.980:FF:000006">
    <property type="entry name" value="Probable transcriptional regulatory protein J113_18170"/>
    <property type="match status" value="1"/>
</dbReference>
<dbReference type="Gene3D" id="1.10.10.200">
    <property type="match status" value="1"/>
</dbReference>
<dbReference type="Gene3D" id="3.30.70.980">
    <property type="match status" value="2"/>
</dbReference>
<dbReference type="HAMAP" id="MF_00693">
    <property type="entry name" value="Transcrip_reg_TACO1"/>
    <property type="match status" value="1"/>
</dbReference>
<dbReference type="InterPro" id="IPR017856">
    <property type="entry name" value="Integrase-like_N"/>
</dbReference>
<dbReference type="InterPro" id="IPR048300">
    <property type="entry name" value="TACO1_YebC-like_2nd/3rd_dom"/>
</dbReference>
<dbReference type="InterPro" id="IPR049083">
    <property type="entry name" value="TACO1_YebC_N"/>
</dbReference>
<dbReference type="InterPro" id="IPR002876">
    <property type="entry name" value="Transcrip_reg_TACO1-like"/>
</dbReference>
<dbReference type="InterPro" id="IPR026564">
    <property type="entry name" value="Transcrip_reg_TACO1-like_dom3"/>
</dbReference>
<dbReference type="InterPro" id="IPR029072">
    <property type="entry name" value="YebC-like"/>
</dbReference>
<dbReference type="NCBIfam" id="NF001030">
    <property type="entry name" value="PRK00110.1"/>
    <property type="match status" value="1"/>
</dbReference>
<dbReference type="NCBIfam" id="NF009044">
    <property type="entry name" value="PRK12378.1"/>
    <property type="match status" value="1"/>
</dbReference>
<dbReference type="NCBIfam" id="TIGR01033">
    <property type="entry name" value="YebC/PmpR family DNA-binding transcriptional regulator"/>
    <property type="match status" value="1"/>
</dbReference>
<dbReference type="PANTHER" id="PTHR12532:SF6">
    <property type="entry name" value="TRANSCRIPTIONAL REGULATORY PROTEIN YEBC-RELATED"/>
    <property type="match status" value="1"/>
</dbReference>
<dbReference type="PANTHER" id="PTHR12532">
    <property type="entry name" value="TRANSLATIONAL ACTIVATOR OF CYTOCHROME C OXIDASE 1"/>
    <property type="match status" value="1"/>
</dbReference>
<dbReference type="Pfam" id="PF20772">
    <property type="entry name" value="TACO1_YebC_N"/>
    <property type="match status" value="1"/>
</dbReference>
<dbReference type="Pfam" id="PF01709">
    <property type="entry name" value="Transcrip_reg"/>
    <property type="match status" value="1"/>
</dbReference>
<dbReference type="SUPFAM" id="SSF75625">
    <property type="entry name" value="YebC-like"/>
    <property type="match status" value="1"/>
</dbReference>
<evidence type="ECO:0000255" key="1">
    <source>
        <dbReference type="HAMAP-Rule" id="MF_00693"/>
    </source>
</evidence>
<reference key="1">
    <citation type="submission" date="1994-03" db="EMBL/GenBank/DDBJ databases">
        <authorList>
            <person name="Smith D.R."/>
            <person name="Robison K."/>
        </authorList>
    </citation>
    <scope>NUCLEOTIDE SEQUENCE [GENOMIC DNA]</scope>
</reference>
<reference key="2">
    <citation type="journal article" date="2001" name="Nature">
        <title>Massive gene decay in the leprosy bacillus.</title>
        <authorList>
            <person name="Cole S.T."/>
            <person name="Eiglmeier K."/>
            <person name="Parkhill J."/>
            <person name="James K.D."/>
            <person name="Thomson N.R."/>
            <person name="Wheeler P.R."/>
            <person name="Honore N."/>
            <person name="Garnier T."/>
            <person name="Churcher C.M."/>
            <person name="Harris D.E."/>
            <person name="Mungall K.L."/>
            <person name="Basham D."/>
            <person name="Brown D."/>
            <person name="Chillingworth T."/>
            <person name="Connor R."/>
            <person name="Davies R.M."/>
            <person name="Devlin K."/>
            <person name="Duthoy S."/>
            <person name="Feltwell T."/>
            <person name="Fraser A."/>
            <person name="Hamlin N."/>
            <person name="Holroyd S."/>
            <person name="Hornsby T."/>
            <person name="Jagels K."/>
            <person name="Lacroix C."/>
            <person name="Maclean J."/>
            <person name="Moule S."/>
            <person name="Murphy L.D."/>
            <person name="Oliver K."/>
            <person name="Quail M.A."/>
            <person name="Rajandream M.A."/>
            <person name="Rutherford K.M."/>
            <person name="Rutter S."/>
            <person name="Seeger K."/>
            <person name="Simon S."/>
            <person name="Simmonds M."/>
            <person name="Skelton J."/>
            <person name="Squares R."/>
            <person name="Squares S."/>
            <person name="Stevens K."/>
            <person name="Taylor K."/>
            <person name="Whitehead S."/>
            <person name="Woodward J.R."/>
            <person name="Barrell B.G."/>
        </authorList>
    </citation>
    <scope>NUCLEOTIDE SEQUENCE [LARGE SCALE GENOMIC DNA]</scope>
    <source>
        <strain>TN</strain>
    </source>
</reference>
<accession>Q49645</accession>
<organism>
    <name type="scientific">Mycobacterium leprae (strain TN)</name>
    <dbReference type="NCBI Taxonomy" id="272631"/>
    <lineage>
        <taxon>Bacteria</taxon>
        <taxon>Bacillati</taxon>
        <taxon>Actinomycetota</taxon>
        <taxon>Actinomycetes</taxon>
        <taxon>Mycobacteriales</taxon>
        <taxon>Mycobacteriaceae</taxon>
        <taxon>Mycobacterium</taxon>
    </lineage>
</organism>